<comment type="function">
    <text evidence="1">One of the primary rRNA binding proteins, it binds directly to 16S rRNA where it nucleates assembly of the head domain of the 30S subunit. Is located at the subunit interface close to the decoding center, probably blocks exit of the E-site tRNA.</text>
</comment>
<comment type="subunit">
    <text evidence="1">Part of the 30S ribosomal subunit. Contacts proteins S9 and S11.</text>
</comment>
<comment type="similarity">
    <text evidence="1">Belongs to the universal ribosomal protein uS7 family.</text>
</comment>
<evidence type="ECO:0000255" key="1">
    <source>
        <dbReference type="HAMAP-Rule" id="MF_00480"/>
    </source>
</evidence>
<evidence type="ECO:0000305" key="2"/>
<organism>
    <name type="scientific">Rippkaea orientalis (strain PCC 8801 / RF-1)</name>
    <name type="common">Cyanothece sp. (strain PCC 8801)</name>
    <dbReference type="NCBI Taxonomy" id="41431"/>
    <lineage>
        <taxon>Bacteria</taxon>
        <taxon>Bacillati</taxon>
        <taxon>Cyanobacteriota</taxon>
        <taxon>Cyanophyceae</taxon>
        <taxon>Oscillatoriophycideae</taxon>
        <taxon>Chroococcales</taxon>
        <taxon>Aphanothecaceae</taxon>
        <taxon>Rippkaea</taxon>
        <taxon>Rippkaea orientalis</taxon>
    </lineage>
</organism>
<reference key="1">
    <citation type="journal article" date="2011" name="MBio">
        <title>Novel metabolic attributes of the genus Cyanothece, comprising a group of unicellular nitrogen-fixing Cyanobacteria.</title>
        <authorList>
            <person name="Bandyopadhyay A."/>
            <person name="Elvitigala T."/>
            <person name="Welsh E."/>
            <person name="Stockel J."/>
            <person name="Liberton M."/>
            <person name="Min H."/>
            <person name="Sherman L.A."/>
            <person name="Pakrasi H.B."/>
        </authorList>
    </citation>
    <scope>NUCLEOTIDE SEQUENCE [LARGE SCALE GENOMIC DNA]</scope>
    <source>
        <strain>PCC 8801 / RF-1</strain>
    </source>
</reference>
<protein>
    <recommendedName>
        <fullName evidence="1">Small ribosomal subunit protein uS7</fullName>
    </recommendedName>
    <alternativeName>
        <fullName evidence="2">30S ribosomal protein S7</fullName>
    </alternativeName>
</protein>
<keyword id="KW-1185">Reference proteome</keyword>
<keyword id="KW-0687">Ribonucleoprotein</keyword>
<keyword id="KW-0689">Ribosomal protein</keyword>
<keyword id="KW-0694">RNA-binding</keyword>
<keyword id="KW-0699">rRNA-binding</keyword>
<keyword id="KW-0820">tRNA-binding</keyword>
<feature type="chain" id="PRO_1000125928" description="Small ribosomal subunit protein uS7">
    <location>
        <begin position="1"/>
        <end position="156"/>
    </location>
</feature>
<gene>
    <name evidence="1" type="primary">rpsG</name>
    <name evidence="1" type="synonym">rps7</name>
    <name type="ordered locus">PCC8801_1538</name>
</gene>
<dbReference type="EMBL" id="CP001287">
    <property type="protein sequence ID" value="ACK65591.1"/>
    <property type="molecule type" value="Genomic_DNA"/>
</dbReference>
<dbReference type="RefSeq" id="WP_012594864.1">
    <property type="nucleotide sequence ID" value="NC_011726.1"/>
</dbReference>
<dbReference type="SMR" id="B7JUP7"/>
<dbReference type="STRING" id="41431.PCC8801_1538"/>
<dbReference type="KEGG" id="cyp:PCC8801_1538"/>
<dbReference type="eggNOG" id="COG0049">
    <property type="taxonomic scope" value="Bacteria"/>
</dbReference>
<dbReference type="HOGENOM" id="CLU_072226_1_1_3"/>
<dbReference type="OrthoDB" id="9807653at2"/>
<dbReference type="Proteomes" id="UP000008204">
    <property type="component" value="Chromosome"/>
</dbReference>
<dbReference type="GO" id="GO:0015935">
    <property type="term" value="C:small ribosomal subunit"/>
    <property type="evidence" value="ECO:0007669"/>
    <property type="project" value="InterPro"/>
</dbReference>
<dbReference type="GO" id="GO:0019843">
    <property type="term" value="F:rRNA binding"/>
    <property type="evidence" value="ECO:0007669"/>
    <property type="project" value="UniProtKB-UniRule"/>
</dbReference>
<dbReference type="GO" id="GO:0003735">
    <property type="term" value="F:structural constituent of ribosome"/>
    <property type="evidence" value="ECO:0007669"/>
    <property type="project" value="InterPro"/>
</dbReference>
<dbReference type="GO" id="GO:0000049">
    <property type="term" value="F:tRNA binding"/>
    <property type="evidence" value="ECO:0007669"/>
    <property type="project" value="UniProtKB-UniRule"/>
</dbReference>
<dbReference type="GO" id="GO:0006412">
    <property type="term" value="P:translation"/>
    <property type="evidence" value="ECO:0007669"/>
    <property type="project" value="UniProtKB-UniRule"/>
</dbReference>
<dbReference type="CDD" id="cd14871">
    <property type="entry name" value="uS7_Chloroplast"/>
    <property type="match status" value="1"/>
</dbReference>
<dbReference type="FunFam" id="1.10.455.10:FF:000001">
    <property type="entry name" value="30S ribosomal protein S7"/>
    <property type="match status" value="1"/>
</dbReference>
<dbReference type="Gene3D" id="1.10.455.10">
    <property type="entry name" value="Ribosomal protein S7 domain"/>
    <property type="match status" value="1"/>
</dbReference>
<dbReference type="HAMAP" id="MF_00480_B">
    <property type="entry name" value="Ribosomal_uS7_B"/>
    <property type="match status" value="1"/>
</dbReference>
<dbReference type="InterPro" id="IPR000235">
    <property type="entry name" value="Ribosomal_uS7"/>
</dbReference>
<dbReference type="InterPro" id="IPR005717">
    <property type="entry name" value="Ribosomal_uS7_bac/org-type"/>
</dbReference>
<dbReference type="InterPro" id="IPR020606">
    <property type="entry name" value="Ribosomal_uS7_CS"/>
</dbReference>
<dbReference type="InterPro" id="IPR023798">
    <property type="entry name" value="Ribosomal_uS7_dom"/>
</dbReference>
<dbReference type="InterPro" id="IPR036823">
    <property type="entry name" value="Ribosomal_uS7_dom_sf"/>
</dbReference>
<dbReference type="NCBIfam" id="TIGR01029">
    <property type="entry name" value="rpsG_bact"/>
    <property type="match status" value="1"/>
</dbReference>
<dbReference type="PANTHER" id="PTHR11205">
    <property type="entry name" value="RIBOSOMAL PROTEIN S7"/>
    <property type="match status" value="1"/>
</dbReference>
<dbReference type="Pfam" id="PF00177">
    <property type="entry name" value="Ribosomal_S7"/>
    <property type="match status" value="1"/>
</dbReference>
<dbReference type="PIRSF" id="PIRSF002122">
    <property type="entry name" value="RPS7p_RPS7a_RPS5e_RPS7o"/>
    <property type="match status" value="1"/>
</dbReference>
<dbReference type="SUPFAM" id="SSF47973">
    <property type="entry name" value="Ribosomal protein S7"/>
    <property type="match status" value="1"/>
</dbReference>
<dbReference type="PROSITE" id="PS00052">
    <property type="entry name" value="RIBOSOMAL_S7"/>
    <property type="match status" value="1"/>
</dbReference>
<sequence>MSRRGNIKRRPVPPDPVYNSRLISMTIRRVMKSGKKSVAAGIMYDALTSIGEKTGSDPLEVFEKAIKNLTPLVEVKARRVGGATYQVPMEVRSSRGTTLALRWLVHYARIRGGRTMSSKLANEIMDAANETGGAMKKRDETHRMAEANKAFAHYRY</sequence>
<proteinExistence type="inferred from homology"/>
<accession>B7JUP7</accession>
<name>RS7_RIPO1</name>